<dbReference type="EMBL" id="DQ473442">
    <property type="protein sequence ID" value="ABF19732.1"/>
    <property type="molecule type" value="mRNA"/>
</dbReference>
<dbReference type="EMBL" id="BC046659">
    <property type="protein sequence ID" value="AAH46659.1"/>
    <property type="molecule type" value="mRNA"/>
</dbReference>
<dbReference type="EMBL" id="BC055998">
    <property type="protein sequence ID" value="AAH55998.1"/>
    <property type="status" value="ALT_FRAME"/>
    <property type="molecule type" value="mRNA"/>
</dbReference>
<dbReference type="EMBL" id="BC110978">
    <property type="protein sequence ID" value="AAI10979.1"/>
    <property type="molecule type" value="mRNA"/>
</dbReference>
<dbReference type="RefSeq" id="NP_001079847.1">
    <property type="nucleotide sequence ID" value="NM_001086378.1"/>
</dbReference>
<dbReference type="SMR" id="Q2TAD5"/>
<dbReference type="GlyCosmos" id="Q2TAD5">
    <property type="glycosylation" value="2 sites, No reported glycans"/>
</dbReference>
<dbReference type="DNASU" id="379537"/>
<dbReference type="GeneID" id="379537"/>
<dbReference type="KEGG" id="xla:379537"/>
<dbReference type="AGR" id="Xenbase:XB-GENE-6255483"/>
<dbReference type="CTD" id="379537"/>
<dbReference type="Xenbase" id="XB-GENE-6255483">
    <property type="gene designation" value="aplnr.S"/>
</dbReference>
<dbReference type="OrthoDB" id="5974286at2759"/>
<dbReference type="Proteomes" id="UP000186698">
    <property type="component" value="Chromosome 1S"/>
</dbReference>
<dbReference type="Bgee" id="379537">
    <property type="expression patterns" value="Expressed in lung and 16 other cell types or tissues"/>
</dbReference>
<dbReference type="GO" id="GO:0005737">
    <property type="term" value="C:cytoplasm"/>
    <property type="evidence" value="ECO:0000314"/>
    <property type="project" value="UniProtKB"/>
</dbReference>
<dbReference type="GO" id="GO:0009897">
    <property type="term" value="C:external side of plasma membrane"/>
    <property type="evidence" value="ECO:0000318"/>
    <property type="project" value="GO_Central"/>
</dbReference>
<dbReference type="GO" id="GO:0005886">
    <property type="term" value="C:plasma membrane"/>
    <property type="evidence" value="ECO:0000314"/>
    <property type="project" value="UniProtKB"/>
</dbReference>
<dbReference type="GO" id="GO:0060182">
    <property type="term" value="F:apelin receptor activity"/>
    <property type="evidence" value="ECO:0000314"/>
    <property type="project" value="UniProtKB"/>
</dbReference>
<dbReference type="GO" id="GO:0019957">
    <property type="term" value="F:C-C chemokine binding"/>
    <property type="evidence" value="ECO:0000318"/>
    <property type="project" value="GO_Central"/>
</dbReference>
<dbReference type="GO" id="GO:0016493">
    <property type="term" value="F:C-C chemokine receptor activity"/>
    <property type="evidence" value="ECO:0000318"/>
    <property type="project" value="GO_Central"/>
</dbReference>
<dbReference type="GO" id="GO:0140897">
    <property type="term" value="F:mechanoreceptor activity"/>
    <property type="evidence" value="ECO:0000250"/>
    <property type="project" value="UniProtKB"/>
</dbReference>
<dbReference type="GO" id="GO:0001525">
    <property type="term" value="P:angiogenesis"/>
    <property type="evidence" value="ECO:0000315"/>
    <property type="project" value="UniProtKB"/>
</dbReference>
<dbReference type="GO" id="GO:0060183">
    <property type="term" value="P:apelin receptor signaling pathway"/>
    <property type="evidence" value="ECO:0000315"/>
    <property type="project" value="UniProtKB"/>
</dbReference>
<dbReference type="GO" id="GO:0001568">
    <property type="term" value="P:blood vessel development"/>
    <property type="evidence" value="ECO:0000250"/>
    <property type="project" value="UniProtKB"/>
</dbReference>
<dbReference type="GO" id="GO:0001569">
    <property type="term" value="P:branching involved in blood vessel morphogenesis"/>
    <property type="evidence" value="ECO:0000250"/>
    <property type="project" value="UniProtKB"/>
</dbReference>
<dbReference type="GO" id="GO:0019722">
    <property type="term" value="P:calcium-mediated signaling"/>
    <property type="evidence" value="ECO:0000318"/>
    <property type="project" value="GO_Central"/>
</dbReference>
<dbReference type="GO" id="GO:0030154">
    <property type="term" value="P:cell differentiation"/>
    <property type="evidence" value="ECO:0007669"/>
    <property type="project" value="UniProtKB-KW"/>
</dbReference>
<dbReference type="GO" id="GO:0007369">
    <property type="term" value="P:gastrulation"/>
    <property type="evidence" value="ECO:0007669"/>
    <property type="project" value="UniProtKB-KW"/>
</dbReference>
<dbReference type="GO" id="GO:0007507">
    <property type="term" value="P:heart development"/>
    <property type="evidence" value="ECO:0000250"/>
    <property type="project" value="UniProtKB"/>
</dbReference>
<dbReference type="GO" id="GO:0006955">
    <property type="term" value="P:immune response"/>
    <property type="evidence" value="ECO:0000318"/>
    <property type="project" value="GO_Central"/>
</dbReference>
<dbReference type="GO" id="GO:0043951">
    <property type="term" value="P:negative regulation of cAMP-mediated signaling"/>
    <property type="evidence" value="ECO:0000250"/>
    <property type="project" value="UniProtKB"/>
</dbReference>
<dbReference type="GO" id="GO:0030593">
    <property type="term" value="P:neutrophil chemotaxis"/>
    <property type="evidence" value="ECO:0000318"/>
    <property type="project" value="GO_Central"/>
</dbReference>
<dbReference type="GO" id="GO:0045766">
    <property type="term" value="P:positive regulation of angiogenesis"/>
    <property type="evidence" value="ECO:0000250"/>
    <property type="project" value="UniProtKB"/>
</dbReference>
<dbReference type="GO" id="GO:0007204">
    <property type="term" value="P:positive regulation of cytosolic calcium ion concentration"/>
    <property type="evidence" value="ECO:0000318"/>
    <property type="project" value="GO_Central"/>
</dbReference>
<dbReference type="GO" id="GO:0051281">
    <property type="term" value="P:positive regulation of release of sequestered calcium ion into cytosol"/>
    <property type="evidence" value="ECO:0000250"/>
    <property type="project" value="UniProtKB"/>
</dbReference>
<dbReference type="CDD" id="cd15190">
    <property type="entry name" value="7tmA_Apelin_R"/>
    <property type="match status" value="1"/>
</dbReference>
<dbReference type="FunFam" id="1.20.1070.10:FF:000106">
    <property type="entry name" value="Apelin receptor a"/>
    <property type="match status" value="1"/>
</dbReference>
<dbReference type="Gene3D" id="1.20.1070.10">
    <property type="entry name" value="Rhodopsin 7-helix transmembrane proteins"/>
    <property type="match status" value="1"/>
</dbReference>
<dbReference type="InterPro" id="IPR000248">
    <property type="entry name" value="ATII_rcpt"/>
</dbReference>
<dbReference type="InterPro" id="IPR050119">
    <property type="entry name" value="CCR1-9-like"/>
</dbReference>
<dbReference type="InterPro" id="IPR000276">
    <property type="entry name" value="GPCR_Rhodpsn"/>
</dbReference>
<dbReference type="InterPro" id="IPR017452">
    <property type="entry name" value="GPCR_Rhodpsn_7TM"/>
</dbReference>
<dbReference type="PANTHER" id="PTHR10489:SF953">
    <property type="entry name" value="APELIN RECEPTOR"/>
    <property type="match status" value="1"/>
</dbReference>
<dbReference type="PANTHER" id="PTHR10489">
    <property type="entry name" value="CELL ADHESION MOLECULE"/>
    <property type="match status" value="1"/>
</dbReference>
<dbReference type="Pfam" id="PF00001">
    <property type="entry name" value="7tm_1"/>
    <property type="match status" value="1"/>
</dbReference>
<dbReference type="PRINTS" id="PR00241">
    <property type="entry name" value="ANGIOTENSINR"/>
</dbReference>
<dbReference type="PRINTS" id="PR00237">
    <property type="entry name" value="GPCRRHODOPSN"/>
</dbReference>
<dbReference type="SUPFAM" id="SSF81321">
    <property type="entry name" value="Family A G protein-coupled receptor-like"/>
    <property type="match status" value="1"/>
</dbReference>
<dbReference type="PROSITE" id="PS00237">
    <property type="entry name" value="G_PROTEIN_RECEP_F1_1"/>
    <property type="match status" value="1"/>
</dbReference>
<dbReference type="PROSITE" id="PS50262">
    <property type="entry name" value="G_PROTEIN_RECEP_F1_2"/>
    <property type="match status" value="1"/>
</dbReference>
<accession>Q2TAD5</accession>
<accession>A1XP43</accession>
<accession>Q05BH5</accession>
<accession>Q7T0X4</accession>
<gene>
    <name type="primary">aplnr-b</name>
    <name type="synonym">agtrl1-b</name>
    <name evidence="10" type="synonym">agtrl1b</name>
</gene>
<organism>
    <name type="scientific">Xenopus laevis</name>
    <name type="common">African clawed frog</name>
    <dbReference type="NCBI Taxonomy" id="8355"/>
    <lineage>
        <taxon>Eukaryota</taxon>
        <taxon>Metazoa</taxon>
        <taxon>Chordata</taxon>
        <taxon>Craniata</taxon>
        <taxon>Vertebrata</taxon>
        <taxon>Euteleostomi</taxon>
        <taxon>Amphibia</taxon>
        <taxon>Batrachia</taxon>
        <taxon>Anura</taxon>
        <taxon>Pipoidea</taxon>
        <taxon>Pipidae</taxon>
        <taxon>Xenopodinae</taxon>
        <taxon>Xenopus</taxon>
        <taxon>Xenopus</taxon>
    </lineage>
</organism>
<reference evidence="8 11" key="1">
    <citation type="journal article" date="2007" name="Dev. Biol.">
        <title>Paracrine and autocrine mechanisms of apelin signaling govern embryonic and tumor angiogenesis.</title>
        <authorList>
            <person name="Kaelin R.E."/>
            <person name="Kretz M.P."/>
            <person name="Meyer A.M."/>
            <person name="Kispert A."/>
            <person name="Heppner F.L."/>
            <person name="Braendli A.W."/>
        </authorList>
    </citation>
    <scope>NUCLEOTIDE SEQUENCE [MRNA]</scope>
    <scope>FUNCTION</scope>
    <scope>SUBCELLULAR LOCATION</scope>
    <scope>TISSUE SPECIFICITY</scope>
    <source>
        <tissue evidence="11">Embryo</tissue>
    </source>
</reference>
<reference evidence="10" key="2">
    <citation type="submission" date="2005-12" db="EMBL/GenBank/DDBJ databases">
        <authorList>
            <consortium name="NIH - Xenopus Gene Collection (XGC) project"/>
        </authorList>
    </citation>
    <scope>NUCLEOTIDE SEQUENCE [LARGE SCALE MRNA]</scope>
    <source>
        <tissue evidence="9">Embryo</tissue>
        <tissue evidence="10">Spleen</tissue>
    </source>
</reference>
<name>APJB_XENLA</name>
<proteinExistence type="evidence at transcript level"/>
<evidence type="ECO:0000250" key="1">
    <source>
        <dbReference type="UniProtKB" id="P35414"/>
    </source>
</evidence>
<evidence type="ECO:0000250" key="2">
    <source>
        <dbReference type="UniProtKB" id="P79960"/>
    </source>
</evidence>
<evidence type="ECO:0000250" key="3">
    <source>
        <dbReference type="UniProtKB" id="Q7SZP9"/>
    </source>
</evidence>
<evidence type="ECO:0000250" key="4">
    <source>
        <dbReference type="UniProtKB" id="Q9WV08"/>
    </source>
</evidence>
<evidence type="ECO:0000255" key="5"/>
<evidence type="ECO:0000255" key="6">
    <source>
        <dbReference type="PROSITE-ProRule" id="PRU00521"/>
    </source>
</evidence>
<evidence type="ECO:0000269" key="7">
    <source>
    </source>
</evidence>
<evidence type="ECO:0000305" key="8"/>
<evidence type="ECO:0000312" key="9">
    <source>
        <dbReference type="EMBL" id="AAH46659.1"/>
    </source>
</evidence>
<evidence type="ECO:0000312" key="10">
    <source>
        <dbReference type="EMBL" id="AAI10979.1"/>
    </source>
</evidence>
<evidence type="ECO:0000312" key="11">
    <source>
        <dbReference type="EMBL" id="ABF19732.1"/>
    </source>
</evidence>
<comment type="function">
    <text evidence="1 2 3 4 7">G protein-coupled receptor for peptide hormones apelin (apln) and apelin receptor early endogenous ligand (apela), that plays a role in the regulation of normal cardiovascular function and fluid homeostasis. When acting as apelin receptor, activates both G(i) protein pathway that inhibits adenylate cyclase activity, and the beta-arrestin pathway that promotes internalization of the receptor (PubMed:17412318). Also functions as mechanoreceptor that is activated by pathological stimuli in a G-protein-independent fashion to induce beta-arrestin signaling, hence eliciting cardiac hypertrophy. However, the presence of apelin ligand blunts cardiac hypertrophic induction from APLNR/APJ on response to pathological stimuli (By similarity). Plays a key role in early development such as gastrulation, blood vessels formation and heart morphogenesis by acting as a receptor for apela hormone, promoting endoderm and mesendoderm cell migration and regulating the migration of cells fated to become myocardial progenitors, respectively (By similarity). Promotes angioblast migration toward the embryonic midline, i.e. the position of the future vessel formation, during vasculogenesis (By similarity). May promote sinus venosus (SV)-derived endothelial cells migration into the developing heart to promote coronary blood vessel development (By similarity). Required for cardiovascular development, particularly for intersomitic vein angiogenesis by acting as a receptor for apln hormone (PubMed:17412318). Also plays a role in various processes in adults such as regulation of blood vessel formation, blood pressure, heart contractility, and heart failure. Acts upstream of the i/o type of G-alpha proteins in the differentiation of endothelium, erythroid cells, myeloid cells and cardiomyocytes (By similarity).</text>
</comment>
<comment type="subcellular location">
    <subcellularLocation>
        <location evidence="7">Cell membrane</location>
        <topology evidence="7">Multi-pass membrane protein</topology>
    </subcellularLocation>
    <text evidence="1 7">Internalized to the cytoplasm after exposure to apelin (apln) (PubMed:17412318). After exposure to apelin receptor early endogenous ligand (apela), internalized from the cell surface into an endosomal recycling compartment, from where it is recycled to the cell membrane (By similarity).</text>
</comment>
<comment type="tissue specificity">
    <text evidence="7">Expressed in all blood vessels including the posterior cardinal vein, intersomitic veins and the vitelline vein network.</text>
</comment>
<comment type="similarity">
    <text evidence="6">Belongs to the G-protein coupled receptor 1 family.</text>
</comment>
<comment type="sequence caution" evidence="8">
    <conflict type="frameshift">
        <sequence resource="EMBL-CDS" id="AAH55998"/>
    </conflict>
</comment>
<sequence length="363" mass="40920">MESEGFSATTEQYEYYDYANETGLQPCDETDWDFSYSLLPVFYMIVFVLGLSGNGVVIFTVWKAKPKRRSADTYIGNLALADLAFVVTLPLWATYTALGFHWPFGSALCKLSSYLVLLNMFASVFCLTCLSFDRYLAIVHSLSSAKLRSRSSILVSLAVIWLFSGLLALPSLILRDTRVEGNNTICDLDFSGVSSKENENFWIGGLSILTTVPGFLLPLLLMTIFYCFIGGKVTMHFQNLKKEEQKKKRLLKIIITLVVVFAICWLPFHILKTIHFLDLMGFLELSCSAQNIIVSLHPYATCLAYVNSCLNPFLYAFFDLRFRSQCFFFFGFKKVLQGHLSNTSSSLSAQTQKSEIHSLATKV</sequence>
<protein>
    <recommendedName>
        <fullName>Apelin receptor B</fullName>
    </recommendedName>
    <alternativeName>
        <fullName>Angiotensin receptor-like 1b</fullName>
    </alternativeName>
    <alternativeName>
        <fullName>Angiotensin receptor-related protein B</fullName>
    </alternativeName>
    <alternativeName>
        <fullName>G-protein coupled receptor APJ-B</fullName>
        <shortName>APJb</shortName>
    </alternativeName>
</protein>
<keyword id="KW-0037">Angiogenesis</keyword>
<keyword id="KW-1003">Cell membrane</keyword>
<keyword id="KW-0217">Developmental protein</keyword>
<keyword id="KW-0221">Differentiation</keyword>
<keyword id="KW-1015">Disulfide bond</keyword>
<keyword id="KW-0297">G-protein coupled receptor</keyword>
<keyword id="KW-0306">Gastrulation</keyword>
<keyword id="KW-0325">Glycoprotein</keyword>
<keyword id="KW-0472">Membrane</keyword>
<keyword id="KW-0675">Receptor</keyword>
<keyword id="KW-1185">Reference proteome</keyword>
<keyword id="KW-0807">Transducer</keyword>
<keyword id="KW-0812">Transmembrane</keyword>
<keyword id="KW-1133">Transmembrane helix</keyword>
<feature type="chain" id="PRO_0000311701" description="Apelin receptor B">
    <location>
        <begin position="1"/>
        <end position="363"/>
    </location>
</feature>
<feature type="topological domain" description="Extracellular" evidence="5">
    <location>
        <begin position="1"/>
        <end position="38"/>
    </location>
</feature>
<feature type="transmembrane region" description="Helical; Name=1" evidence="5">
    <location>
        <begin position="39"/>
        <end position="59"/>
    </location>
</feature>
<feature type="topological domain" description="Cytoplasmic" evidence="5">
    <location>
        <begin position="60"/>
        <end position="77"/>
    </location>
</feature>
<feature type="transmembrane region" description="Helical; Name=2" evidence="5">
    <location>
        <begin position="78"/>
        <end position="98"/>
    </location>
</feature>
<feature type="topological domain" description="Extracellular" evidence="5">
    <location>
        <begin position="99"/>
        <end position="111"/>
    </location>
</feature>
<feature type="transmembrane region" description="Helical; Name=3" evidence="5">
    <location>
        <begin position="112"/>
        <end position="132"/>
    </location>
</feature>
<feature type="topological domain" description="Cytoplasmic" evidence="5">
    <location>
        <begin position="133"/>
        <end position="152"/>
    </location>
</feature>
<feature type="transmembrane region" description="Helical; Name=4" evidence="5">
    <location>
        <begin position="153"/>
        <end position="173"/>
    </location>
</feature>
<feature type="topological domain" description="Extracellular" evidence="5">
    <location>
        <begin position="174"/>
        <end position="200"/>
    </location>
</feature>
<feature type="transmembrane region" description="Helical; Name=5" evidence="5">
    <location>
        <begin position="201"/>
        <end position="221"/>
    </location>
</feature>
<feature type="topological domain" description="Cytoplasmic" evidence="5">
    <location>
        <begin position="222"/>
        <end position="249"/>
    </location>
</feature>
<feature type="transmembrane region" description="Helical; Name=6" evidence="5">
    <location>
        <begin position="250"/>
        <end position="270"/>
    </location>
</feature>
<feature type="topological domain" description="Extracellular" evidence="5">
    <location>
        <begin position="271"/>
        <end position="297"/>
    </location>
</feature>
<feature type="transmembrane region" description="Helical; Name=7" evidence="5">
    <location>
        <begin position="298"/>
        <end position="318"/>
    </location>
</feature>
<feature type="topological domain" description="Cytoplasmic" evidence="5">
    <location>
        <begin position="319"/>
        <end position="363"/>
    </location>
</feature>
<feature type="glycosylation site" description="N-linked (GlcNAc...) asparagine" evidence="5">
    <location>
        <position position="20"/>
    </location>
</feature>
<feature type="glycosylation site" description="N-linked (GlcNAc...) asparagine" evidence="5">
    <location>
        <position position="182"/>
    </location>
</feature>
<feature type="disulfide bond" evidence="1">
    <location>
        <begin position="27"/>
        <end position="287"/>
    </location>
</feature>
<feature type="disulfide bond" evidence="1">
    <location>
        <begin position="109"/>
        <end position="186"/>
    </location>
</feature>
<feature type="sequence conflict" description="In Ref. 1; ABF19732 and 2; AAH46659." evidence="8" ref="1 2">
    <original>E</original>
    <variation>D</variation>
    <location>
        <position position="14"/>
    </location>
</feature>
<feature type="sequence conflict" description="In Ref. 1; ABF19732." evidence="8" ref="1">
    <original>E</original>
    <variation>D</variation>
    <location>
        <position position="244"/>
    </location>
</feature>